<sequence length="101" mass="11433">MAGQKIRIRLKAYDHEAIDASARKIVETVTRTGASVVGPVPLPTEKNVYCVIRSPHKYKDSREHFEMRTHKRLIDILDPTPKTVDALMRIDLPASVDVNIQ</sequence>
<organism>
    <name type="scientific">Mycobacterium sp. (strain MCS)</name>
    <dbReference type="NCBI Taxonomy" id="164756"/>
    <lineage>
        <taxon>Bacteria</taxon>
        <taxon>Bacillati</taxon>
        <taxon>Actinomycetota</taxon>
        <taxon>Actinomycetes</taxon>
        <taxon>Mycobacteriales</taxon>
        <taxon>Mycobacteriaceae</taxon>
        <taxon>Mycobacterium</taxon>
    </lineage>
</organism>
<dbReference type="EMBL" id="CP000384">
    <property type="protein sequence ID" value="ABG07126.1"/>
    <property type="molecule type" value="Genomic_DNA"/>
</dbReference>
<dbReference type="SMR" id="Q1BDA8"/>
<dbReference type="KEGG" id="mmc:Mmcs_1012"/>
<dbReference type="HOGENOM" id="CLU_122625_1_3_11"/>
<dbReference type="BioCyc" id="MSP164756:G1G6O-1036-MONOMER"/>
<dbReference type="GO" id="GO:1990904">
    <property type="term" value="C:ribonucleoprotein complex"/>
    <property type="evidence" value="ECO:0007669"/>
    <property type="project" value="UniProtKB-KW"/>
</dbReference>
<dbReference type="GO" id="GO:0005840">
    <property type="term" value="C:ribosome"/>
    <property type="evidence" value="ECO:0007669"/>
    <property type="project" value="UniProtKB-KW"/>
</dbReference>
<dbReference type="GO" id="GO:0003735">
    <property type="term" value="F:structural constituent of ribosome"/>
    <property type="evidence" value="ECO:0007669"/>
    <property type="project" value="InterPro"/>
</dbReference>
<dbReference type="GO" id="GO:0000049">
    <property type="term" value="F:tRNA binding"/>
    <property type="evidence" value="ECO:0007669"/>
    <property type="project" value="UniProtKB-UniRule"/>
</dbReference>
<dbReference type="GO" id="GO:0006412">
    <property type="term" value="P:translation"/>
    <property type="evidence" value="ECO:0007669"/>
    <property type="project" value="UniProtKB-UniRule"/>
</dbReference>
<dbReference type="FunFam" id="3.30.70.600:FF:000001">
    <property type="entry name" value="30S ribosomal protein S10"/>
    <property type="match status" value="1"/>
</dbReference>
<dbReference type="Gene3D" id="3.30.70.600">
    <property type="entry name" value="Ribosomal protein S10 domain"/>
    <property type="match status" value="1"/>
</dbReference>
<dbReference type="HAMAP" id="MF_00508">
    <property type="entry name" value="Ribosomal_uS10"/>
    <property type="match status" value="1"/>
</dbReference>
<dbReference type="InterPro" id="IPR001848">
    <property type="entry name" value="Ribosomal_uS10"/>
</dbReference>
<dbReference type="InterPro" id="IPR018268">
    <property type="entry name" value="Ribosomal_uS10_CS"/>
</dbReference>
<dbReference type="InterPro" id="IPR027486">
    <property type="entry name" value="Ribosomal_uS10_dom"/>
</dbReference>
<dbReference type="InterPro" id="IPR036838">
    <property type="entry name" value="Ribosomal_uS10_dom_sf"/>
</dbReference>
<dbReference type="NCBIfam" id="NF001861">
    <property type="entry name" value="PRK00596.1"/>
    <property type="match status" value="1"/>
</dbReference>
<dbReference type="NCBIfam" id="TIGR01049">
    <property type="entry name" value="rpsJ_bact"/>
    <property type="match status" value="1"/>
</dbReference>
<dbReference type="PANTHER" id="PTHR11700">
    <property type="entry name" value="30S RIBOSOMAL PROTEIN S10 FAMILY MEMBER"/>
    <property type="match status" value="1"/>
</dbReference>
<dbReference type="Pfam" id="PF00338">
    <property type="entry name" value="Ribosomal_S10"/>
    <property type="match status" value="1"/>
</dbReference>
<dbReference type="PRINTS" id="PR00971">
    <property type="entry name" value="RIBOSOMALS10"/>
</dbReference>
<dbReference type="SMART" id="SM01403">
    <property type="entry name" value="Ribosomal_S10"/>
    <property type="match status" value="1"/>
</dbReference>
<dbReference type="SUPFAM" id="SSF54999">
    <property type="entry name" value="Ribosomal protein S10"/>
    <property type="match status" value="1"/>
</dbReference>
<dbReference type="PROSITE" id="PS00361">
    <property type="entry name" value="RIBOSOMAL_S10"/>
    <property type="match status" value="1"/>
</dbReference>
<proteinExistence type="inferred from homology"/>
<reference key="1">
    <citation type="submission" date="2006-06" db="EMBL/GenBank/DDBJ databases">
        <title>Complete sequence of chromosome of Mycobacterium sp. MCS.</title>
        <authorList>
            <consortium name="US DOE Joint Genome Institute"/>
            <person name="Copeland A."/>
            <person name="Lucas S."/>
            <person name="Lapidus A."/>
            <person name="Barry K."/>
            <person name="Detter J.C."/>
            <person name="Glavina del Rio T."/>
            <person name="Hammon N."/>
            <person name="Israni S."/>
            <person name="Dalin E."/>
            <person name="Tice H."/>
            <person name="Pitluck S."/>
            <person name="Martinez M."/>
            <person name="Schmutz J."/>
            <person name="Larimer F."/>
            <person name="Land M."/>
            <person name="Hauser L."/>
            <person name="Kyrpides N."/>
            <person name="Kim E."/>
            <person name="Miller C.D."/>
            <person name="Hughes J.E."/>
            <person name="Anderson A.J."/>
            <person name="Sims R.C."/>
            <person name="Richardson P."/>
        </authorList>
    </citation>
    <scope>NUCLEOTIDE SEQUENCE [LARGE SCALE GENOMIC DNA]</scope>
    <source>
        <strain>MCS</strain>
    </source>
</reference>
<comment type="function">
    <text evidence="1">Involved in the binding of tRNA to the ribosomes.</text>
</comment>
<comment type="subunit">
    <text evidence="1">Part of the 30S ribosomal subunit.</text>
</comment>
<comment type="similarity">
    <text evidence="1">Belongs to the universal ribosomal protein uS10 family.</text>
</comment>
<accession>Q1BDA8</accession>
<evidence type="ECO:0000255" key="1">
    <source>
        <dbReference type="HAMAP-Rule" id="MF_00508"/>
    </source>
</evidence>
<evidence type="ECO:0000305" key="2"/>
<keyword id="KW-0687">Ribonucleoprotein</keyword>
<keyword id="KW-0689">Ribosomal protein</keyword>
<protein>
    <recommendedName>
        <fullName evidence="1">Small ribosomal subunit protein uS10</fullName>
    </recommendedName>
    <alternativeName>
        <fullName evidence="2">30S ribosomal protein S10</fullName>
    </alternativeName>
</protein>
<gene>
    <name evidence="1" type="primary">rpsJ</name>
    <name type="ordered locus">Mmcs_1012</name>
</gene>
<feature type="chain" id="PRO_1000015063" description="Small ribosomal subunit protein uS10">
    <location>
        <begin position="1"/>
        <end position="101"/>
    </location>
</feature>
<name>RS10_MYCSS</name>